<name>EF1G_DANRE</name>
<keyword id="KW-0251">Elongation factor</keyword>
<keyword id="KW-0648">Protein biosynthesis</keyword>
<keyword id="KW-1185">Reference proteome</keyword>
<proteinExistence type="evidence at transcript level"/>
<organism>
    <name type="scientific">Danio rerio</name>
    <name type="common">Zebrafish</name>
    <name type="synonym">Brachydanio rerio</name>
    <dbReference type="NCBI Taxonomy" id="7955"/>
    <lineage>
        <taxon>Eukaryota</taxon>
        <taxon>Metazoa</taxon>
        <taxon>Chordata</taxon>
        <taxon>Craniata</taxon>
        <taxon>Vertebrata</taxon>
        <taxon>Euteleostomi</taxon>
        <taxon>Actinopterygii</taxon>
        <taxon>Neopterygii</taxon>
        <taxon>Teleostei</taxon>
        <taxon>Ostariophysi</taxon>
        <taxon>Cypriniformes</taxon>
        <taxon>Danionidae</taxon>
        <taxon>Danioninae</taxon>
        <taxon>Danio</taxon>
    </lineage>
</organism>
<sequence length="442" mass="50457">MAAGTLYTYPENWRAFKAQIAAQYSGARLKIASAPPAFTFGQTNRSPAFLGNFPLGKVPAYQGDDGFCLFESNAIAHYLSNDVLRGSTPQASAQVLQWVSFADSEVIPPASAWVFPTLGIMQFNKQATEQAKEEVKRVLAVLNQHLNTRTFLVGERISLADITVVCSLLWLYKQVLEPAFRQPYPNVTRWFVTCVNQPQFKTVLGEVKLCEKMAQFDAKKFAEMQPKKEAPIKKEKGGKEGGKQQPQQQEKKEKKKEEKKAAPAEEEMDECEAALASEPKAKDPFAHLPKSSFVMDEFKRKYSNEDTMTVALPYFWDHFDREGFSIWYAEYRFPEELTMAFMSCNLITGMFQRLDKLRKNAFASVILFGANNDSCISGIWVFRGQDLAFPLSDDWQIDYESYTWRKLDVDSEECKTMVKEYFAWEGEFKHVGKPFNQGKIFK</sequence>
<evidence type="ECO:0000255" key="1">
    <source>
        <dbReference type="PROSITE-ProRule" id="PRU00519"/>
    </source>
</evidence>
<evidence type="ECO:0000256" key="2">
    <source>
        <dbReference type="SAM" id="MobiDB-lite"/>
    </source>
</evidence>
<reference key="1">
    <citation type="journal article" date="2004" name="Proc. Natl. Acad. Sci. U.S.A.">
        <title>Hematopoietic gene expression profile in zebrafish kidney marrow.</title>
        <authorList>
            <person name="Song H.-D."/>
            <person name="Sun X.-J."/>
            <person name="Deng M."/>
            <person name="Zhang G.-W."/>
            <person name="Zhou Y."/>
            <person name="Wu X.-Y."/>
            <person name="Sheng Y."/>
            <person name="Chen Y."/>
            <person name="Ruan Z."/>
            <person name="Jiang C.-L."/>
            <person name="Fan H.-Y."/>
            <person name="Zon L.I."/>
            <person name="Kanki J.P."/>
            <person name="Liu T.X."/>
            <person name="Look A.T."/>
            <person name="Chen Z."/>
        </authorList>
    </citation>
    <scope>NUCLEOTIDE SEQUENCE [LARGE SCALE MRNA]</scope>
    <source>
        <tissue>Kidney marrow</tissue>
    </source>
</reference>
<reference key="2">
    <citation type="submission" date="2003-09" db="EMBL/GenBank/DDBJ databases">
        <authorList>
            <consortium name="NIH - Zebrafish Gene Collection (ZGC) project"/>
        </authorList>
    </citation>
    <scope>NUCLEOTIDE SEQUENCE [LARGE SCALE MRNA]</scope>
    <source>
        <tissue>Kidney</tissue>
    </source>
</reference>
<accession>Q6PE25</accession>
<protein>
    <recommendedName>
        <fullName>Elongation factor 1-gamma</fullName>
        <shortName>EF-1-gamma</shortName>
    </recommendedName>
    <alternativeName>
        <fullName>eEF-1B gamma</fullName>
    </alternativeName>
</protein>
<gene>
    <name type="primary">eef1g</name>
</gene>
<comment type="function">
    <text>Probably plays a role in anchoring the complex to other cellular components.</text>
</comment>
<comment type="subunit">
    <text>EF-1 is composed of four subunits: alpha, beta, delta, and gamma.</text>
</comment>
<feature type="chain" id="PRO_0000208818" description="Elongation factor 1-gamma">
    <location>
        <begin position="1"/>
        <end position="442"/>
    </location>
</feature>
<feature type="domain" description="GST N-terminal">
    <location>
        <begin position="2"/>
        <end position="87"/>
    </location>
</feature>
<feature type="domain" description="GST C-terminal">
    <location>
        <begin position="88"/>
        <end position="216"/>
    </location>
</feature>
<feature type="domain" description="EF-1-gamma C-terminal" evidence="1">
    <location>
        <begin position="281"/>
        <end position="442"/>
    </location>
</feature>
<feature type="region of interest" description="Disordered" evidence="2">
    <location>
        <begin position="227"/>
        <end position="273"/>
    </location>
</feature>
<feature type="compositionally biased region" description="Basic and acidic residues" evidence="2">
    <location>
        <begin position="227"/>
        <end position="242"/>
    </location>
</feature>
<feature type="compositionally biased region" description="Basic and acidic residues" evidence="2">
    <location>
        <begin position="249"/>
        <end position="263"/>
    </location>
</feature>
<dbReference type="EMBL" id="AY394968">
    <property type="protein sequence ID" value="AAQ94595.1"/>
    <property type="molecule type" value="mRNA"/>
</dbReference>
<dbReference type="EMBL" id="BC058315">
    <property type="protein sequence ID" value="AAH58315.1"/>
    <property type="molecule type" value="mRNA"/>
</dbReference>
<dbReference type="SMR" id="Q6PE25"/>
<dbReference type="FunCoup" id="Q6PE25">
    <property type="interactions" value="3059"/>
</dbReference>
<dbReference type="STRING" id="7955.ENSDARP00000072983"/>
<dbReference type="PaxDb" id="7955-ENSDARP00000072983"/>
<dbReference type="Ensembl" id="ENSDART00000078522">
    <property type="protein sequence ID" value="ENSDARP00000072983"/>
    <property type="gene ID" value="ENSDARG00000056119"/>
</dbReference>
<dbReference type="AGR" id="ZFIN:ZDB-GENE-020423-3"/>
<dbReference type="ZFIN" id="ZDB-GENE-020423-3">
    <property type="gene designation" value="eef1g"/>
</dbReference>
<dbReference type="eggNOG" id="KOG0867">
    <property type="taxonomic scope" value="Eukaryota"/>
</dbReference>
<dbReference type="eggNOG" id="KOG1627">
    <property type="taxonomic scope" value="Eukaryota"/>
</dbReference>
<dbReference type="InParanoid" id="Q6PE25"/>
<dbReference type="OMA" id="TQYFSWT"/>
<dbReference type="PhylomeDB" id="Q6PE25"/>
<dbReference type="PRO" id="PR:Q6PE25"/>
<dbReference type="Proteomes" id="UP000000437">
    <property type="component" value="Unplaced"/>
</dbReference>
<dbReference type="Bgee" id="ENSDARG00000056119">
    <property type="expression patterns" value="Expressed in muscle tissue and 29 other cell types or tissues"/>
</dbReference>
<dbReference type="ExpressionAtlas" id="Q6PE25">
    <property type="expression patterns" value="baseline and differential"/>
</dbReference>
<dbReference type="GO" id="GO:0005737">
    <property type="term" value="C:cytoplasm"/>
    <property type="evidence" value="ECO:0000318"/>
    <property type="project" value="GO_Central"/>
</dbReference>
<dbReference type="GO" id="GO:0005634">
    <property type="term" value="C:nucleus"/>
    <property type="evidence" value="ECO:0000318"/>
    <property type="project" value="GO_Central"/>
</dbReference>
<dbReference type="GO" id="GO:0003746">
    <property type="term" value="F:translation elongation factor activity"/>
    <property type="evidence" value="ECO:0007669"/>
    <property type="project" value="UniProtKB-KW"/>
</dbReference>
<dbReference type="GO" id="GO:0006414">
    <property type="term" value="P:translational elongation"/>
    <property type="evidence" value="ECO:0000318"/>
    <property type="project" value="GO_Central"/>
</dbReference>
<dbReference type="CDD" id="cd03181">
    <property type="entry name" value="GST_C_EF1Bgamma_like"/>
    <property type="match status" value="1"/>
</dbReference>
<dbReference type="CDD" id="cd03044">
    <property type="entry name" value="GST_N_EF1Bgamma"/>
    <property type="match status" value="1"/>
</dbReference>
<dbReference type="FunFam" id="1.20.1050.10:FF:000021">
    <property type="entry name" value="Elongation factor 1-gamma"/>
    <property type="match status" value="1"/>
</dbReference>
<dbReference type="FunFam" id="3.40.30.10:FF:000088">
    <property type="entry name" value="Elongation factor 1-gamma"/>
    <property type="match status" value="1"/>
</dbReference>
<dbReference type="FunFam" id="3.30.70.1010:FF:000001">
    <property type="entry name" value="Elongation factor 1-gamma 1"/>
    <property type="match status" value="1"/>
</dbReference>
<dbReference type="Gene3D" id="1.20.1050.10">
    <property type="match status" value="1"/>
</dbReference>
<dbReference type="Gene3D" id="3.40.30.10">
    <property type="entry name" value="Glutaredoxin"/>
    <property type="match status" value="1"/>
</dbReference>
<dbReference type="Gene3D" id="3.30.70.1010">
    <property type="entry name" value="Translation elongation factor EF1B, gamma chain, conserved domain"/>
    <property type="match status" value="1"/>
</dbReference>
<dbReference type="InterPro" id="IPR050802">
    <property type="entry name" value="EF-GSTs"/>
</dbReference>
<dbReference type="InterPro" id="IPR001662">
    <property type="entry name" value="EF1B_G_C"/>
</dbReference>
<dbReference type="InterPro" id="IPR036433">
    <property type="entry name" value="EF1B_G_C_sf"/>
</dbReference>
<dbReference type="InterPro" id="IPR010987">
    <property type="entry name" value="Glutathione-S-Trfase_C-like"/>
</dbReference>
<dbReference type="InterPro" id="IPR036282">
    <property type="entry name" value="Glutathione-S-Trfase_C_sf"/>
</dbReference>
<dbReference type="InterPro" id="IPR040079">
    <property type="entry name" value="Glutathione_S-Trfase"/>
</dbReference>
<dbReference type="InterPro" id="IPR004045">
    <property type="entry name" value="Glutathione_S-Trfase_N"/>
</dbReference>
<dbReference type="InterPro" id="IPR004046">
    <property type="entry name" value="GST_C"/>
</dbReference>
<dbReference type="InterPro" id="IPR036249">
    <property type="entry name" value="Thioredoxin-like_sf"/>
</dbReference>
<dbReference type="PANTHER" id="PTHR43986">
    <property type="entry name" value="ELONGATION FACTOR 1-GAMMA"/>
    <property type="match status" value="1"/>
</dbReference>
<dbReference type="PANTHER" id="PTHR43986:SF1">
    <property type="entry name" value="ELONGATION FACTOR 1-GAMMA"/>
    <property type="match status" value="1"/>
</dbReference>
<dbReference type="Pfam" id="PF00647">
    <property type="entry name" value="EF1G"/>
    <property type="match status" value="1"/>
</dbReference>
<dbReference type="Pfam" id="PF00043">
    <property type="entry name" value="GST_C"/>
    <property type="match status" value="1"/>
</dbReference>
<dbReference type="Pfam" id="PF02798">
    <property type="entry name" value="GST_N"/>
    <property type="match status" value="1"/>
</dbReference>
<dbReference type="SFLD" id="SFLDS00019">
    <property type="entry name" value="Glutathione_Transferase_(cytos"/>
    <property type="match status" value="1"/>
</dbReference>
<dbReference type="SFLD" id="SFLDG00358">
    <property type="entry name" value="Main_(cytGST)"/>
    <property type="match status" value="1"/>
</dbReference>
<dbReference type="SMART" id="SM01183">
    <property type="entry name" value="EF1G"/>
    <property type="match status" value="1"/>
</dbReference>
<dbReference type="SUPFAM" id="SSF89942">
    <property type="entry name" value="eEF1-gamma domain"/>
    <property type="match status" value="1"/>
</dbReference>
<dbReference type="SUPFAM" id="SSF47616">
    <property type="entry name" value="GST C-terminal domain-like"/>
    <property type="match status" value="1"/>
</dbReference>
<dbReference type="SUPFAM" id="SSF52833">
    <property type="entry name" value="Thioredoxin-like"/>
    <property type="match status" value="1"/>
</dbReference>
<dbReference type="PROSITE" id="PS50040">
    <property type="entry name" value="EF1G_C"/>
    <property type="match status" value="1"/>
</dbReference>
<dbReference type="PROSITE" id="PS50405">
    <property type="entry name" value="GST_CTER"/>
    <property type="match status" value="1"/>
</dbReference>
<dbReference type="PROSITE" id="PS50404">
    <property type="entry name" value="GST_NTER"/>
    <property type="match status" value="1"/>
</dbReference>